<keyword id="KW-0255">Endonuclease</keyword>
<keyword id="KW-1048">Host nucleus</keyword>
<keyword id="KW-0378">Hydrolase</keyword>
<keyword id="KW-0460">Magnesium</keyword>
<keyword id="KW-0479">Metal-binding</keyword>
<keyword id="KW-0540">Nuclease</keyword>
<keyword id="KW-1185">Reference proteome</keyword>
<protein>
    <recommendedName>
        <fullName>Probable RAD2-like endonuclease 369L</fullName>
        <ecNumber>3.1.-.-</ecNumber>
    </recommendedName>
</protein>
<sequence>MGIKNLTKFIKEKCQEAYVTENINELSFKKIAIDTPMYMYKYKSMNAAKMVENNGIYYNPDGWLWSFIYFIYSLRKHDIHPIFILEGGYPEEKNKTRMARKKDREDVKKKTLSLEESISSYATSLRLRPEDIPQDLKEEWNKIAKKNNLPFEDFDFETVKDHVKQRHRYDIRITNRDYEKLKILLKIMNTPFIQAPMEAEAFCAYLYKKKIIHGIASNDSDILAYGCNLIVDFEFDVKIDEETKISKITYINYDYLLNKLDLQSSEFLDFCIMCGTDYNDNIYRIGAVKSYELIKVQKCIENVGKFLDPNNKKGTILILNHLRIRHIFNHYGMKNIDDVTNMQFLEKKASWSSVPNFYLLTMLTIKFNINIDLEWIRHGFEKCNIKWDCESEYEENVEKTNVEETNNEVDEFPIF</sequence>
<comment type="function">
    <text evidence="2">Probable endonuclease.</text>
</comment>
<comment type="cofactor">
    <cofactor evidence="1">
        <name>Mg(2+)</name>
        <dbReference type="ChEBI" id="CHEBI:18420"/>
    </cofactor>
    <text evidence="1">Binds 2 magnesium ions per subunit.</text>
</comment>
<comment type="subcellular location">
    <subcellularLocation>
        <location evidence="1">Host nucleus</location>
    </subcellularLocation>
</comment>
<comment type="similarity">
    <text evidence="2">Belongs to the XPG/RAD2 endonuclease family.</text>
</comment>
<gene>
    <name type="ORF">IIV6-369L</name>
</gene>
<accession>Q91FF5</accession>
<proteinExistence type="inferred from homology"/>
<evidence type="ECO:0000250" key="1"/>
<evidence type="ECO:0000305" key="2"/>
<name>VF369_IIV6</name>
<dbReference type="EC" id="3.1.-.-"/>
<dbReference type="EMBL" id="AF303741">
    <property type="protein sequence ID" value="AAK82229.1"/>
    <property type="molecule type" value="Genomic_DNA"/>
</dbReference>
<dbReference type="RefSeq" id="NP_149832.1">
    <property type="nucleotide sequence ID" value="NC_003038.1"/>
</dbReference>
<dbReference type="SMR" id="Q91FF5"/>
<dbReference type="KEGG" id="vg:1733029"/>
<dbReference type="OrthoDB" id="21654at10239"/>
<dbReference type="Proteomes" id="UP000001359">
    <property type="component" value="Genome"/>
</dbReference>
<dbReference type="GO" id="GO:0042025">
    <property type="term" value="C:host cell nucleus"/>
    <property type="evidence" value="ECO:0007669"/>
    <property type="project" value="UniProtKB-SubCell"/>
</dbReference>
<dbReference type="GO" id="GO:0008409">
    <property type="term" value="F:5'-3' exonuclease activity"/>
    <property type="evidence" value="ECO:0007669"/>
    <property type="project" value="TreeGrafter"/>
</dbReference>
<dbReference type="GO" id="GO:0017108">
    <property type="term" value="F:5'-flap endonuclease activity"/>
    <property type="evidence" value="ECO:0007669"/>
    <property type="project" value="TreeGrafter"/>
</dbReference>
<dbReference type="GO" id="GO:0046872">
    <property type="term" value="F:metal ion binding"/>
    <property type="evidence" value="ECO:0007669"/>
    <property type="project" value="UniProtKB-KW"/>
</dbReference>
<dbReference type="Gene3D" id="1.10.150.20">
    <property type="entry name" value="5' to 3' exonuclease, C-terminal subdomain"/>
    <property type="match status" value="1"/>
</dbReference>
<dbReference type="Gene3D" id="3.40.50.1010">
    <property type="entry name" value="5'-nuclease"/>
    <property type="match status" value="1"/>
</dbReference>
<dbReference type="InterPro" id="IPR036279">
    <property type="entry name" value="5-3_exonuclease_C_sf"/>
</dbReference>
<dbReference type="InterPro" id="IPR029060">
    <property type="entry name" value="PIN-like_dom_sf"/>
</dbReference>
<dbReference type="InterPro" id="IPR006086">
    <property type="entry name" value="XPG-I_dom"/>
</dbReference>
<dbReference type="InterPro" id="IPR006084">
    <property type="entry name" value="XPG/Rad2"/>
</dbReference>
<dbReference type="InterPro" id="IPR006085">
    <property type="entry name" value="XPG_DNA_repair_N"/>
</dbReference>
<dbReference type="PANTHER" id="PTHR11081:SF9">
    <property type="entry name" value="FLAP ENDONUCLEASE 1"/>
    <property type="match status" value="1"/>
</dbReference>
<dbReference type="PANTHER" id="PTHR11081">
    <property type="entry name" value="FLAP ENDONUCLEASE FAMILY MEMBER"/>
    <property type="match status" value="1"/>
</dbReference>
<dbReference type="Pfam" id="PF00867">
    <property type="entry name" value="XPG_I"/>
    <property type="match status" value="1"/>
</dbReference>
<dbReference type="Pfam" id="PF00752">
    <property type="entry name" value="XPG_N"/>
    <property type="match status" value="1"/>
</dbReference>
<dbReference type="PRINTS" id="PR00853">
    <property type="entry name" value="XPGRADSUPER"/>
</dbReference>
<dbReference type="SMART" id="SM00484">
    <property type="entry name" value="XPGI"/>
    <property type="match status" value="1"/>
</dbReference>
<dbReference type="SMART" id="SM00485">
    <property type="entry name" value="XPGN"/>
    <property type="match status" value="1"/>
</dbReference>
<dbReference type="SUPFAM" id="SSF47807">
    <property type="entry name" value="5' to 3' exonuclease, C-terminal subdomain"/>
    <property type="match status" value="1"/>
</dbReference>
<dbReference type="SUPFAM" id="SSF88723">
    <property type="entry name" value="PIN domain-like"/>
    <property type="match status" value="1"/>
</dbReference>
<feature type="chain" id="PRO_0000377501" description="Probable RAD2-like endonuclease 369L">
    <location>
        <begin position="1"/>
        <end position="415"/>
    </location>
</feature>
<feature type="region of interest" description="N-domain" evidence="1">
    <location>
        <begin position="1"/>
        <end position="114"/>
    </location>
</feature>
<feature type="region of interest" description="I-domain" evidence="1">
    <location>
        <begin position="163"/>
        <end position="297"/>
    </location>
</feature>
<feature type="binding site" evidence="1">
    <location>
        <position position="34"/>
    </location>
    <ligand>
        <name>Mg(2+)</name>
        <dbReference type="ChEBI" id="CHEBI:18420"/>
        <label>1</label>
    </ligand>
</feature>
<feature type="binding site" evidence="1">
    <location>
        <position position="86"/>
    </location>
    <ligand>
        <name>Mg(2+)</name>
        <dbReference type="ChEBI" id="CHEBI:18420"/>
        <label>1</label>
    </ligand>
</feature>
<feature type="binding site" evidence="1">
    <location>
        <position position="198"/>
    </location>
    <ligand>
        <name>Mg(2+)</name>
        <dbReference type="ChEBI" id="CHEBI:18420"/>
        <label>1</label>
    </ligand>
</feature>
<feature type="binding site" evidence="1">
    <location>
        <position position="200"/>
    </location>
    <ligand>
        <name>Mg(2+)</name>
        <dbReference type="ChEBI" id="CHEBI:18420"/>
        <label>1</label>
    </ligand>
</feature>
<feature type="binding site" evidence="1">
    <location>
        <position position="219"/>
    </location>
    <ligand>
        <name>Mg(2+)</name>
        <dbReference type="ChEBI" id="CHEBI:18420"/>
        <label>2</label>
    </ligand>
</feature>
<feature type="binding site" evidence="1">
    <location>
        <position position="221"/>
    </location>
    <ligand>
        <name>Mg(2+)</name>
        <dbReference type="ChEBI" id="CHEBI:18420"/>
        <label>2</label>
    </ligand>
</feature>
<feature type="binding site" evidence="1">
    <location>
        <position position="277"/>
    </location>
    <ligand>
        <name>Mg(2+)</name>
        <dbReference type="ChEBI" id="CHEBI:18420"/>
        <label>2</label>
    </ligand>
</feature>
<organismHost>
    <name type="scientific">Acheta domesticus</name>
    <name type="common">House cricket</name>
    <dbReference type="NCBI Taxonomy" id="6997"/>
</organismHost>
<organismHost>
    <name type="scientific">Chilo suppressalis</name>
    <name type="common">Asiatic rice borer moth</name>
    <dbReference type="NCBI Taxonomy" id="168631"/>
</organismHost>
<organismHost>
    <name type="scientific">Gryllus bimaculatus</name>
    <name type="common">Two-spotted cricket</name>
    <dbReference type="NCBI Taxonomy" id="6999"/>
</organismHost>
<organismHost>
    <name type="scientific">Gryllus campestris</name>
    <dbReference type="NCBI Taxonomy" id="58607"/>
</organismHost>
<organismHost>
    <name type="scientific">Spodoptera frugiperda</name>
    <name type="common">Fall armyworm</name>
    <dbReference type="NCBI Taxonomy" id="7108"/>
</organismHost>
<organism>
    <name type="scientific">Invertebrate iridescent virus 6</name>
    <name type="common">IIV-6</name>
    <name type="synonym">Chilo iridescent virus</name>
    <dbReference type="NCBI Taxonomy" id="176652"/>
    <lineage>
        <taxon>Viruses</taxon>
        <taxon>Varidnaviria</taxon>
        <taxon>Bamfordvirae</taxon>
        <taxon>Nucleocytoviricota</taxon>
        <taxon>Megaviricetes</taxon>
        <taxon>Pimascovirales</taxon>
        <taxon>Iridoviridae</taxon>
        <taxon>Betairidovirinae</taxon>
        <taxon>Iridovirus</taxon>
    </lineage>
</organism>
<reference key="1">
    <citation type="journal article" date="2001" name="Virology">
        <title>Analysis of the first complete DNA sequence of an invertebrate iridovirus: coding strategy of the genome of Chilo iridescent virus.</title>
        <authorList>
            <person name="Jakob N.J."/>
            <person name="Mueller K."/>
            <person name="Bahr U."/>
            <person name="Darai G."/>
        </authorList>
    </citation>
    <scope>NUCLEOTIDE SEQUENCE [LARGE SCALE GENOMIC DNA]</scope>
</reference>
<reference key="2">
    <citation type="journal article" date="2007" name="Virol. J.">
        <title>Comparative genomic analysis of the family Iridoviridae: re-annotating and defining the core set of iridovirus genes.</title>
        <authorList>
            <person name="Eaton H.E."/>
            <person name="Metcalf J."/>
            <person name="Penny E."/>
            <person name="Tcherepanov V."/>
            <person name="Upton C."/>
            <person name="Brunetti C.R."/>
        </authorList>
    </citation>
    <scope>GENOME REANNOTATION</scope>
</reference>